<sequence length="213" mass="23151">MTSLRYWDISPALDPSTPTWPGDTPFQQEWAARLDEHCPVNVGRVTLSPHTGAHVDAPLHYRADGLAIGQVPLDVYMGPCRVLHCIGATPLVTPEHLAGQLDDLPPRVLLRTFERVPANWPEGFCAIAPTTVECLAERGVRLIGIDTPSLDPQHSKTLDAHHAVGRHGMAILEGVVLDEVPAGDYELLALPLKFTHLDASPVRAVLRSLPTAE</sequence>
<reference key="1">
    <citation type="submission" date="2007-06" db="EMBL/GenBank/DDBJ databases">
        <authorList>
            <person name="Dodson R.J."/>
            <person name="Harkins D."/>
            <person name="Paulsen I.T."/>
        </authorList>
    </citation>
    <scope>NUCLEOTIDE SEQUENCE [LARGE SCALE GENOMIC DNA]</scope>
    <source>
        <strain>DSM 24068 / PA7</strain>
    </source>
</reference>
<gene>
    <name evidence="1" type="primary">kynB</name>
    <name type="ordered locus">PSPA7_3206</name>
</gene>
<name>KYNB_PSEP7</name>
<protein>
    <recommendedName>
        <fullName evidence="1">Kynurenine formamidase</fullName>
        <shortName evidence="1">KFA</shortName>
        <shortName evidence="1">KFase</shortName>
        <ecNumber evidence="1">3.5.1.9</ecNumber>
    </recommendedName>
    <alternativeName>
        <fullName evidence="1">Arylformamidase</fullName>
    </alternativeName>
    <alternativeName>
        <fullName evidence="1">N-formylkynurenine formamidase</fullName>
        <shortName evidence="1">FKF</shortName>
    </alternativeName>
</protein>
<proteinExistence type="inferred from homology"/>
<keyword id="KW-0378">Hydrolase</keyword>
<keyword id="KW-0479">Metal-binding</keyword>
<keyword id="KW-0823">Tryptophan catabolism</keyword>
<keyword id="KW-0862">Zinc</keyword>
<comment type="function">
    <text evidence="1">Catalyzes the hydrolysis of N-formyl-L-kynurenine to L-kynurenine, the second step in the kynurenine pathway of tryptophan degradation.</text>
</comment>
<comment type="catalytic activity">
    <reaction evidence="1">
        <text>N-formyl-L-kynurenine + H2O = L-kynurenine + formate + H(+)</text>
        <dbReference type="Rhea" id="RHEA:13009"/>
        <dbReference type="ChEBI" id="CHEBI:15377"/>
        <dbReference type="ChEBI" id="CHEBI:15378"/>
        <dbReference type="ChEBI" id="CHEBI:15740"/>
        <dbReference type="ChEBI" id="CHEBI:57959"/>
        <dbReference type="ChEBI" id="CHEBI:58629"/>
        <dbReference type="EC" id="3.5.1.9"/>
    </reaction>
</comment>
<comment type="cofactor">
    <cofactor evidence="1">
        <name>Zn(2+)</name>
        <dbReference type="ChEBI" id="CHEBI:29105"/>
    </cofactor>
    <text evidence="1">Binds 2 zinc ions per subunit.</text>
</comment>
<comment type="pathway">
    <text evidence="1">Amino-acid degradation; L-tryptophan degradation via kynurenine pathway; L-kynurenine from L-tryptophan: step 2/2.</text>
</comment>
<comment type="subunit">
    <text evidence="1">Homodimer.</text>
</comment>
<comment type="similarity">
    <text evidence="1">Belongs to the Cyclase 1 superfamily. KynB family.</text>
</comment>
<accession>A6V681</accession>
<feature type="chain" id="PRO_0000362128" description="Kynurenine formamidase">
    <location>
        <begin position="1"/>
        <end position="213"/>
    </location>
</feature>
<feature type="active site" description="Proton donor/acceptor" evidence="1">
    <location>
        <position position="60"/>
    </location>
</feature>
<feature type="binding site" evidence="1">
    <location>
        <position position="20"/>
    </location>
    <ligand>
        <name>substrate</name>
    </ligand>
</feature>
<feature type="binding site" evidence="1">
    <location>
        <position position="50"/>
    </location>
    <ligand>
        <name>Zn(2+)</name>
        <dbReference type="ChEBI" id="CHEBI:29105"/>
        <label>1</label>
    </ligand>
</feature>
<feature type="binding site" evidence="1">
    <location>
        <position position="54"/>
    </location>
    <ligand>
        <name>Zn(2+)</name>
        <dbReference type="ChEBI" id="CHEBI:29105"/>
        <label>1</label>
    </ligand>
</feature>
<feature type="binding site" evidence="1">
    <location>
        <position position="56"/>
    </location>
    <ligand>
        <name>Zn(2+)</name>
        <dbReference type="ChEBI" id="CHEBI:29105"/>
        <label>1</label>
    </ligand>
</feature>
<feature type="binding site" evidence="1">
    <location>
        <position position="56"/>
    </location>
    <ligand>
        <name>Zn(2+)</name>
        <dbReference type="ChEBI" id="CHEBI:29105"/>
        <label>2</label>
    </ligand>
</feature>
<feature type="binding site" evidence="1">
    <location>
        <position position="161"/>
    </location>
    <ligand>
        <name>Zn(2+)</name>
        <dbReference type="ChEBI" id="CHEBI:29105"/>
        <label>2</label>
    </ligand>
</feature>
<feature type="binding site" evidence="1">
    <location>
        <position position="173"/>
    </location>
    <ligand>
        <name>Zn(2+)</name>
        <dbReference type="ChEBI" id="CHEBI:29105"/>
        <label>1</label>
    </ligand>
</feature>
<feature type="binding site" evidence="1">
    <location>
        <position position="173"/>
    </location>
    <ligand>
        <name>Zn(2+)</name>
        <dbReference type="ChEBI" id="CHEBI:29105"/>
        <label>2</label>
    </ligand>
</feature>
<evidence type="ECO:0000255" key="1">
    <source>
        <dbReference type="HAMAP-Rule" id="MF_01969"/>
    </source>
</evidence>
<organism>
    <name type="scientific">Pseudomonas paraeruginosa (strain DSM 24068 / PA7)</name>
    <name type="common">Pseudomonas aeruginosa (strain PA7)</name>
    <dbReference type="NCBI Taxonomy" id="381754"/>
    <lineage>
        <taxon>Bacteria</taxon>
        <taxon>Pseudomonadati</taxon>
        <taxon>Pseudomonadota</taxon>
        <taxon>Gammaproteobacteria</taxon>
        <taxon>Pseudomonadales</taxon>
        <taxon>Pseudomonadaceae</taxon>
        <taxon>Pseudomonas</taxon>
        <taxon>Pseudomonas paraeruginosa</taxon>
    </lineage>
</organism>
<dbReference type="EC" id="3.5.1.9" evidence="1"/>
<dbReference type="EMBL" id="CP000744">
    <property type="protein sequence ID" value="ABR83287.1"/>
    <property type="molecule type" value="Genomic_DNA"/>
</dbReference>
<dbReference type="RefSeq" id="WP_012075964.1">
    <property type="nucleotide sequence ID" value="NC_009656.1"/>
</dbReference>
<dbReference type="SMR" id="A6V681"/>
<dbReference type="KEGG" id="pap:PSPA7_3206"/>
<dbReference type="HOGENOM" id="CLU_030671_3_1_6"/>
<dbReference type="UniPathway" id="UPA00333">
    <property type="reaction ID" value="UER00454"/>
</dbReference>
<dbReference type="Proteomes" id="UP000001582">
    <property type="component" value="Chromosome"/>
</dbReference>
<dbReference type="GO" id="GO:0004061">
    <property type="term" value="F:arylformamidase activity"/>
    <property type="evidence" value="ECO:0000250"/>
    <property type="project" value="UniProtKB"/>
</dbReference>
<dbReference type="GO" id="GO:0004328">
    <property type="term" value="F:formamidase activity"/>
    <property type="evidence" value="ECO:0007669"/>
    <property type="project" value="InterPro"/>
</dbReference>
<dbReference type="GO" id="GO:0008270">
    <property type="term" value="F:zinc ion binding"/>
    <property type="evidence" value="ECO:0007669"/>
    <property type="project" value="UniProtKB-UniRule"/>
</dbReference>
<dbReference type="GO" id="GO:0043420">
    <property type="term" value="P:anthranilate metabolic process"/>
    <property type="evidence" value="ECO:0000250"/>
    <property type="project" value="UniProtKB"/>
</dbReference>
<dbReference type="GO" id="GO:0019441">
    <property type="term" value="P:L-tryptophan catabolic process to kynurenine"/>
    <property type="evidence" value="ECO:0000250"/>
    <property type="project" value="UniProtKB"/>
</dbReference>
<dbReference type="FunFam" id="3.50.30.50:FF:000001">
    <property type="entry name" value="Kynurenine formamidase"/>
    <property type="match status" value="1"/>
</dbReference>
<dbReference type="Gene3D" id="3.50.30.50">
    <property type="entry name" value="Putative cyclase"/>
    <property type="match status" value="1"/>
</dbReference>
<dbReference type="HAMAP" id="MF_01969">
    <property type="entry name" value="KynB"/>
    <property type="match status" value="1"/>
</dbReference>
<dbReference type="InterPro" id="IPR007325">
    <property type="entry name" value="KFase/CYL"/>
</dbReference>
<dbReference type="InterPro" id="IPR037175">
    <property type="entry name" value="KFase_sf"/>
</dbReference>
<dbReference type="InterPro" id="IPR017484">
    <property type="entry name" value="Kynurenine_formamidase_bac"/>
</dbReference>
<dbReference type="NCBIfam" id="TIGR03035">
    <property type="entry name" value="trp_arylform"/>
    <property type="match status" value="1"/>
</dbReference>
<dbReference type="PANTHER" id="PTHR31118">
    <property type="entry name" value="CYCLASE-LIKE PROTEIN 2"/>
    <property type="match status" value="1"/>
</dbReference>
<dbReference type="PANTHER" id="PTHR31118:SF32">
    <property type="entry name" value="KYNURENINE FORMAMIDASE"/>
    <property type="match status" value="1"/>
</dbReference>
<dbReference type="Pfam" id="PF04199">
    <property type="entry name" value="Cyclase"/>
    <property type="match status" value="1"/>
</dbReference>
<dbReference type="SUPFAM" id="SSF102198">
    <property type="entry name" value="Putative cyclase"/>
    <property type="match status" value="1"/>
</dbReference>